<dbReference type="EC" id="5.1.3.20" evidence="1"/>
<dbReference type="EMBL" id="AE004969">
    <property type="protein sequence ID" value="AAW89147.1"/>
    <property type="molecule type" value="Genomic_DNA"/>
</dbReference>
<dbReference type="RefSeq" id="YP_207559.1">
    <property type="nucleotide sequence ID" value="NC_002946.2"/>
</dbReference>
<dbReference type="SMR" id="Q5F9J0"/>
<dbReference type="STRING" id="242231.NGO_0403"/>
<dbReference type="KEGG" id="ngo:NGO_0403"/>
<dbReference type="PATRIC" id="fig|242231.10.peg.485"/>
<dbReference type="HOGENOM" id="CLU_007383_1_3_4"/>
<dbReference type="UniPathway" id="UPA00356">
    <property type="reaction ID" value="UER00440"/>
</dbReference>
<dbReference type="Proteomes" id="UP000000535">
    <property type="component" value="Chromosome"/>
</dbReference>
<dbReference type="GO" id="GO:0008712">
    <property type="term" value="F:ADP-glyceromanno-heptose 6-epimerase activity"/>
    <property type="evidence" value="ECO:0007669"/>
    <property type="project" value="UniProtKB-UniRule"/>
</dbReference>
<dbReference type="GO" id="GO:0050661">
    <property type="term" value="F:NADP binding"/>
    <property type="evidence" value="ECO:0007669"/>
    <property type="project" value="InterPro"/>
</dbReference>
<dbReference type="GO" id="GO:0097171">
    <property type="term" value="P:ADP-L-glycero-beta-D-manno-heptose biosynthetic process"/>
    <property type="evidence" value="ECO:0007669"/>
    <property type="project" value="UniProtKB-UniPathway"/>
</dbReference>
<dbReference type="GO" id="GO:0005975">
    <property type="term" value="P:carbohydrate metabolic process"/>
    <property type="evidence" value="ECO:0007669"/>
    <property type="project" value="UniProtKB-UniRule"/>
</dbReference>
<dbReference type="CDD" id="cd05248">
    <property type="entry name" value="ADP_GME_SDR_e"/>
    <property type="match status" value="1"/>
</dbReference>
<dbReference type="Gene3D" id="3.40.50.720">
    <property type="entry name" value="NAD(P)-binding Rossmann-like Domain"/>
    <property type="match status" value="1"/>
</dbReference>
<dbReference type="Gene3D" id="3.90.25.10">
    <property type="entry name" value="UDP-galactose 4-epimerase, domain 1"/>
    <property type="match status" value="1"/>
</dbReference>
<dbReference type="HAMAP" id="MF_01601">
    <property type="entry name" value="Heptose_epimerase"/>
    <property type="match status" value="1"/>
</dbReference>
<dbReference type="InterPro" id="IPR001509">
    <property type="entry name" value="Epimerase_deHydtase"/>
</dbReference>
<dbReference type="InterPro" id="IPR011912">
    <property type="entry name" value="Heptose_epim"/>
</dbReference>
<dbReference type="InterPro" id="IPR036291">
    <property type="entry name" value="NAD(P)-bd_dom_sf"/>
</dbReference>
<dbReference type="NCBIfam" id="TIGR02197">
    <property type="entry name" value="heptose_epim"/>
    <property type="match status" value="1"/>
</dbReference>
<dbReference type="PANTHER" id="PTHR43103:SF3">
    <property type="entry name" value="ADP-L-GLYCERO-D-MANNO-HEPTOSE-6-EPIMERASE"/>
    <property type="match status" value="1"/>
</dbReference>
<dbReference type="PANTHER" id="PTHR43103">
    <property type="entry name" value="NUCLEOSIDE-DIPHOSPHATE-SUGAR EPIMERASE"/>
    <property type="match status" value="1"/>
</dbReference>
<dbReference type="Pfam" id="PF01370">
    <property type="entry name" value="Epimerase"/>
    <property type="match status" value="1"/>
</dbReference>
<dbReference type="SUPFAM" id="SSF51735">
    <property type="entry name" value="NAD(P)-binding Rossmann-fold domains"/>
    <property type="match status" value="1"/>
</dbReference>
<feature type="chain" id="PRO_0000255733" description="ADP-L-glycero-D-manno-heptose-6-epimerase">
    <location>
        <begin position="1"/>
        <end position="334"/>
    </location>
</feature>
<feature type="active site" description="Proton acceptor" evidence="1">
    <location>
        <position position="141"/>
    </location>
</feature>
<feature type="active site" description="Proton acceptor" evidence="1">
    <location>
        <position position="180"/>
    </location>
</feature>
<feature type="binding site" evidence="1">
    <location>
        <begin position="11"/>
        <end position="12"/>
    </location>
    <ligand>
        <name>NADP(+)</name>
        <dbReference type="ChEBI" id="CHEBI:58349"/>
    </ligand>
</feature>
<feature type="binding site" evidence="1">
    <location>
        <begin position="32"/>
        <end position="33"/>
    </location>
    <ligand>
        <name>NADP(+)</name>
        <dbReference type="ChEBI" id="CHEBI:58349"/>
    </ligand>
</feature>
<feature type="binding site" evidence="1">
    <location>
        <position position="39"/>
    </location>
    <ligand>
        <name>NADP(+)</name>
        <dbReference type="ChEBI" id="CHEBI:58349"/>
    </ligand>
</feature>
<feature type="binding site" evidence="1">
    <location>
        <position position="54"/>
    </location>
    <ligand>
        <name>NADP(+)</name>
        <dbReference type="ChEBI" id="CHEBI:58349"/>
    </ligand>
</feature>
<feature type="binding site" evidence="1">
    <location>
        <begin position="77"/>
        <end position="81"/>
    </location>
    <ligand>
        <name>NADP(+)</name>
        <dbReference type="ChEBI" id="CHEBI:58349"/>
    </ligand>
</feature>
<feature type="binding site" evidence="1">
    <location>
        <position position="94"/>
    </location>
    <ligand>
        <name>NADP(+)</name>
        <dbReference type="ChEBI" id="CHEBI:58349"/>
    </ligand>
</feature>
<feature type="binding site" evidence="1">
    <location>
        <position position="145"/>
    </location>
    <ligand>
        <name>NADP(+)</name>
        <dbReference type="ChEBI" id="CHEBI:58349"/>
    </ligand>
</feature>
<feature type="binding site" evidence="1">
    <location>
        <position position="171"/>
    </location>
    <ligand>
        <name>substrate</name>
    </ligand>
</feature>
<feature type="binding site" evidence="1">
    <location>
        <position position="172"/>
    </location>
    <ligand>
        <name>NADP(+)</name>
        <dbReference type="ChEBI" id="CHEBI:58349"/>
    </ligand>
</feature>
<feature type="binding site" evidence="1">
    <location>
        <position position="180"/>
    </location>
    <ligand>
        <name>NADP(+)</name>
        <dbReference type="ChEBI" id="CHEBI:58349"/>
    </ligand>
</feature>
<feature type="binding site" evidence="1">
    <location>
        <position position="182"/>
    </location>
    <ligand>
        <name>substrate</name>
    </ligand>
</feature>
<feature type="binding site" evidence="1">
    <location>
        <position position="189"/>
    </location>
    <ligand>
        <name>substrate</name>
    </ligand>
</feature>
<feature type="binding site" evidence="1">
    <location>
        <begin position="203"/>
        <end position="206"/>
    </location>
    <ligand>
        <name>substrate</name>
    </ligand>
</feature>
<feature type="binding site" evidence="1">
    <location>
        <position position="216"/>
    </location>
    <ligand>
        <name>substrate</name>
    </ligand>
</feature>
<feature type="binding site" evidence="1">
    <location>
        <position position="295"/>
    </location>
    <ligand>
        <name>substrate</name>
    </ligand>
</feature>
<protein>
    <recommendedName>
        <fullName evidence="1">ADP-L-glycero-D-manno-heptose-6-epimerase</fullName>
        <ecNumber evidence="1">5.1.3.20</ecNumber>
    </recommendedName>
    <alternativeName>
        <fullName evidence="1">ADP-L-glycero-beta-D-manno-heptose-6-epimerase</fullName>
        <shortName evidence="1">ADP-glyceromanno-heptose 6-epimerase</shortName>
        <shortName evidence="1">ADP-hep 6-epimerase</shortName>
        <shortName evidence="1">AGME</shortName>
    </alternativeName>
</protein>
<name>HLDD_NEIG1</name>
<accession>Q5F9J0</accession>
<evidence type="ECO:0000255" key="1">
    <source>
        <dbReference type="HAMAP-Rule" id="MF_01601"/>
    </source>
</evidence>
<gene>
    <name evidence="1" type="primary">hldD</name>
    <name type="ordered locus">NGO_0403</name>
</gene>
<comment type="function">
    <text evidence="1">Catalyzes the interconversion between ADP-D-glycero-beta-D-manno-heptose and ADP-L-glycero-beta-D-manno-heptose via an epimerization at carbon 6 of the heptose.</text>
</comment>
<comment type="catalytic activity">
    <reaction evidence="1">
        <text>ADP-D-glycero-beta-D-manno-heptose = ADP-L-glycero-beta-D-manno-heptose</text>
        <dbReference type="Rhea" id="RHEA:17577"/>
        <dbReference type="ChEBI" id="CHEBI:59967"/>
        <dbReference type="ChEBI" id="CHEBI:61506"/>
        <dbReference type="EC" id="5.1.3.20"/>
    </reaction>
</comment>
<comment type="cofactor">
    <cofactor evidence="1">
        <name>NADP(+)</name>
        <dbReference type="ChEBI" id="CHEBI:58349"/>
    </cofactor>
    <text evidence="1">Binds 1 NADP(+) per subunit.</text>
</comment>
<comment type="pathway">
    <text evidence="1">Nucleotide-sugar biosynthesis; ADP-L-glycero-beta-D-manno-heptose biosynthesis; ADP-L-glycero-beta-D-manno-heptose from D-glycero-beta-D-manno-heptose 7-phosphate: step 4/4.</text>
</comment>
<comment type="subunit">
    <text evidence="1">Homopentamer.</text>
</comment>
<comment type="domain">
    <text evidence="1">Contains a large N-terminal NADP-binding domain, and a smaller C-terminal substrate-binding domain.</text>
</comment>
<comment type="similarity">
    <text evidence="1">Belongs to the NAD(P)-dependent epimerase/dehydratase family. HldD subfamily.</text>
</comment>
<keyword id="KW-0119">Carbohydrate metabolism</keyword>
<keyword id="KW-0413">Isomerase</keyword>
<keyword id="KW-0521">NADP</keyword>
<keyword id="KW-1185">Reference proteome</keyword>
<organism>
    <name type="scientific">Neisseria gonorrhoeae (strain ATCC 700825 / FA 1090)</name>
    <dbReference type="NCBI Taxonomy" id="242231"/>
    <lineage>
        <taxon>Bacteria</taxon>
        <taxon>Pseudomonadati</taxon>
        <taxon>Pseudomonadota</taxon>
        <taxon>Betaproteobacteria</taxon>
        <taxon>Neisseriales</taxon>
        <taxon>Neisseriaceae</taxon>
        <taxon>Neisseria</taxon>
    </lineage>
</organism>
<sequence length="334" mass="38373">MTIIVTGAAGFIGSNIVKALNQRGITDIVAVDNLTKGEKFKNLAECEIAHYLDKHEFIRQVREHILPYQNIEAVFHQGACSDTMNHDGLYMMENNYQYTLDLLDWCQDERIPFLYASSAAVYGKGEIFREERELEKPLNVYGYSKFLFDQVLRRRMKEGLTAQVVGFRYFNVYGQHEQHKGRMASVAFHHFHQYREHGYVNLFGSNDGYGNGEQTRDFVSVEDVAKINLYFFDHPELSGIYNLGTGRSQQFNELAAAAVNACRAAEGKSELSLKELVEEELIRYIPFPDALKGKYQGFTQADITKLREAGYKEEFFDVKAGVNRYVKWMLENLA</sequence>
<reference key="1">
    <citation type="submission" date="2003-03" db="EMBL/GenBank/DDBJ databases">
        <title>The complete genome sequence of Neisseria gonorrhoeae.</title>
        <authorList>
            <person name="Lewis L.A."/>
            <person name="Gillaspy A.F."/>
            <person name="McLaughlin R.E."/>
            <person name="Gipson M."/>
            <person name="Ducey T.F."/>
            <person name="Ownbey T."/>
            <person name="Hartman K."/>
            <person name="Nydick C."/>
            <person name="Carson M.B."/>
            <person name="Vaughn J."/>
            <person name="Thomson C."/>
            <person name="Song L."/>
            <person name="Lin S."/>
            <person name="Yuan X."/>
            <person name="Najar F."/>
            <person name="Zhan M."/>
            <person name="Ren Q."/>
            <person name="Zhu H."/>
            <person name="Qi S."/>
            <person name="Kenton S.M."/>
            <person name="Lai H."/>
            <person name="White J.D."/>
            <person name="Clifton S."/>
            <person name="Roe B.A."/>
            <person name="Dyer D.W."/>
        </authorList>
    </citation>
    <scope>NUCLEOTIDE SEQUENCE [LARGE SCALE GENOMIC DNA]</scope>
    <source>
        <strain>ATCC 700825 / FA 1090</strain>
    </source>
</reference>
<proteinExistence type="inferred from homology"/>